<comment type="function">
    <text evidence="1">Produces ATP from ADP in the presence of a proton gradient across the membrane.</text>
</comment>
<comment type="subunit">
    <text>F-type ATPases have 2 components, CF(1) - the catalytic core - and CF(0) - the membrane proton channel. CF(1) has five subunits: alpha(3), beta(3), gamma(1), delta(1), epsilon(1). CF(0) has three main subunits: a, b and c.</text>
</comment>
<comment type="subcellular location">
    <subcellularLocation>
        <location evidence="1">Cell membrane</location>
        <topology evidence="1">Peripheral membrane protein</topology>
    </subcellularLocation>
</comment>
<comment type="similarity">
    <text evidence="1">Belongs to the ATPase epsilon chain family.</text>
</comment>
<accession>O50143</accession>
<accession>E6UDL9</accession>
<organism>
    <name type="scientific">Ruminococcus albus (strain ATCC 27210 / DSM 20455 / JCM 14654 / NCDO 2250 / 7)</name>
    <dbReference type="NCBI Taxonomy" id="697329"/>
    <lineage>
        <taxon>Bacteria</taxon>
        <taxon>Bacillati</taxon>
        <taxon>Bacillota</taxon>
        <taxon>Clostridia</taxon>
        <taxon>Eubacteriales</taxon>
        <taxon>Oscillospiraceae</taxon>
        <taxon>Ruminococcus</taxon>
    </lineage>
</organism>
<dbReference type="EMBL" id="AB006151">
    <property type="protein sequence ID" value="BAA23689.1"/>
    <property type="molecule type" value="Genomic_DNA"/>
</dbReference>
<dbReference type="EMBL" id="CP002403">
    <property type="protein sequence ID" value="ADU20847.1"/>
    <property type="molecule type" value="Genomic_DNA"/>
</dbReference>
<dbReference type="RefSeq" id="WP_013497039.1">
    <property type="nucleotide sequence ID" value="NZ_JHYT01000020.1"/>
</dbReference>
<dbReference type="SMR" id="O50143"/>
<dbReference type="STRING" id="697329.Rumal_0290"/>
<dbReference type="KEGG" id="ral:Rumal_0290"/>
<dbReference type="eggNOG" id="COG0355">
    <property type="taxonomic scope" value="Bacteria"/>
</dbReference>
<dbReference type="HOGENOM" id="CLU_084338_1_3_9"/>
<dbReference type="OrthoDB" id="9804110at2"/>
<dbReference type="Proteomes" id="UP000006919">
    <property type="component" value="Chromosome"/>
</dbReference>
<dbReference type="GO" id="GO:0005886">
    <property type="term" value="C:plasma membrane"/>
    <property type="evidence" value="ECO:0007669"/>
    <property type="project" value="UniProtKB-SubCell"/>
</dbReference>
<dbReference type="GO" id="GO:0045259">
    <property type="term" value="C:proton-transporting ATP synthase complex"/>
    <property type="evidence" value="ECO:0007669"/>
    <property type="project" value="UniProtKB-KW"/>
</dbReference>
<dbReference type="GO" id="GO:0005524">
    <property type="term" value="F:ATP binding"/>
    <property type="evidence" value="ECO:0007669"/>
    <property type="project" value="UniProtKB-UniRule"/>
</dbReference>
<dbReference type="GO" id="GO:0046933">
    <property type="term" value="F:proton-transporting ATP synthase activity, rotational mechanism"/>
    <property type="evidence" value="ECO:0007669"/>
    <property type="project" value="UniProtKB-UniRule"/>
</dbReference>
<dbReference type="CDD" id="cd12152">
    <property type="entry name" value="F1-ATPase_delta"/>
    <property type="match status" value="1"/>
</dbReference>
<dbReference type="Gene3D" id="1.20.5.440">
    <property type="entry name" value="ATP synthase delta/epsilon subunit, C-terminal domain"/>
    <property type="match status" value="1"/>
</dbReference>
<dbReference type="Gene3D" id="2.60.15.10">
    <property type="entry name" value="F0F1 ATP synthase delta/epsilon subunit, N-terminal"/>
    <property type="match status" value="1"/>
</dbReference>
<dbReference type="HAMAP" id="MF_00530">
    <property type="entry name" value="ATP_synth_epsil_bac"/>
    <property type="match status" value="1"/>
</dbReference>
<dbReference type="InterPro" id="IPR036794">
    <property type="entry name" value="ATP_F1_dsu/esu_C_sf"/>
</dbReference>
<dbReference type="InterPro" id="IPR001469">
    <property type="entry name" value="ATP_synth_F1_dsu/esu"/>
</dbReference>
<dbReference type="InterPro" id="IPR020546">
    <property type="entry name" value="ATP_synth_F1_dsu/esu_N"/>
</dbReference>
<dbReference type="InterPro" id="IPR020547">
    <property type="entry name" value="ATP_synth_F1_esu_C"/>
</dbReference>
<dbReference type="InterPro" id="IPR036771">
    <property type="entry name" value="ATPsynth_dsu/esu_N"/>
</dbReference>
<dbReference type="NCBIfam" id="TIGR01216">
    <property type="entry name" value="ATP_synt_epsi"/>
    <property type="match status" value="1"/>
</dbReference>
<dbReference type="PANTHER" id="PTHR13822">
    <property type="entry name" value="ATP SYNTHASE DELTA/EPSILON CHAIN"/>
    <property type="match status" value="1"/>
</dbReference>
<dbReference type="PANTHER" id="PTHR13822:SF10">
    <property type="entry name" value="ATP SYNTHASE EPSILON CHAIN, CHLOROPLASTIC"/>
    <property type="match status" value="1"/>
</dbReference>
<dbReference type="Pfam" id="PF00401">
    <property type="entry name" value="ATP-synt_DE"/>
    <property type="match status" value="1"/>
</dbReference>
<dbReference type="Pfam" id="PF02823">
    <property type="entry name" value="ATP-synt_DE_N"/>
    <property type="match status" value="1"/>
</dbReference>
<dbReference type="SUPFAM" id="SSF46604">
    <property type="entry name" value="Epsilon subunit of F1F0-ATP synthase C-terminal domain"/>
    <property type="match status" value="1"/>
</dbReference>
<dbReference type="SUPFAM" id="SSF51344">
    <property type="entry name" value="Epsilon subunit of F1F0-ATP synthase N-terminal domain"/>
    <property type="match status" value="1"/>
</dbReference>
<evidence type="ECO:0000255" key="1">
    <source>
        <dbReference type="HAMAP-Rule" id="MF_00530"/>
    </source>
</evidence>
<sequence>MAVFKLRVLTPEKIFFEGDAEQLIAKTTSGYVGILKGHAPYVASIVPSEMKIRSDGSFRSAAISDGIVKVSEDSMVTVLTSAIEWSDEIDVARAERSKARAEKQLKAETSRTEFDLAERQLKRAVNRISVANKK</sequence>
<proteinExistence type="inferred from homology"/>
<protein>
    <recommendedName>
        <fullName evidence="1">ATP synthase epsilon chain</fullName>
    </recommendedName>
    <alternativeName>
        <fullName evidence="1">ATP synthase F1 sector epsilon subunit</fullName>
    </alternativeName>
    <alternativeName>
        <fullName evidence="1">F-ATPase epsilon subunit</fullName>
    </alternativeName>
</protein>
<gene>
    <name evidence="1" type="primary">atpC</name>
    <name type="ordered locus">Rumal_0290</name>
</gene>
<feature type="chain" id="PRO_0000188195" description="ATP synthase epsilon chain">
    <location>
        <begin position="1"/>
        <end position="134"/>
    </location>
</feature>
<keyword id="KW-0066">ATP synthesis</keyword>
<keyword id="KW-1003">Cell membrane</keyword>
<keyword id="KW-0139">CF(1)</keyword>
<keyword id="KW-0375">Hydrogen ion transport</keyword>
<keyword id="KW-0406">Ion transport</keyword>
<keyword id="KW-0472">Membrane</keyword>
<keyword id="KW-0813">Transport</keyword>
<name>ATPE_RUMA7</name>
<reference key="1">
    <citation type="submission" date="1997-07" db="EMBL/GenBank/DDBJ databases">
        <title>Sequence analysis of the gene coding proton-translocating ATPase of Ruminococcus albus.</title>
        <authorList>
            <person name="Umemori J."/>
            <person name="Miwa T."/>
            <person name="Nagamine T."/>
            <person name="Ogata K."/>
            <person name="Takenaka A."/>
            <person name="Hino T."/>
        </authorList>
    </citation>
    <scope>NUCLEOTIDE SEQUENCE [GENOMIC DNA]</scope>
    <source>
        <strain>ATCC 27210 / DSM 20455 / JCM 14654 / NCDO 2250 / 7</strain>
    </source>
</reference>
<reference key="2">
    <citation type="journal article" date="2011" name="J. Bacteriol.">
        <title>Complete genome of the cellulolytic ruminal bacterium Ruminococcus albus 7.</title>
        <authorList>
            <person name="Suen G."/>
            <person name="Stevenson D.M."/>
            <person name="Bruce D.C."/>
            <person name="Chertkov O."/>
            <person name="Copeland A."/>
            <person name="Cheng J.F."/>
            <person name="Detter C."/>
            <person name="Detter J.C."/>
            <person name="Goodwin L.A."/>
            <person name="Han C.S."/>
            <person name="Hauser L.J."/>
            <person name="Ivanova N.N."/>
            <person name="Kyrpides N.C."/>
            <person name="Land M.L."/>
            <person name="Lapidus A."/>
            <person name="Lucas S."/>
            <person name="Ovchinnikova G."/>
            <person name="Pitluck S."/>
            <person name="Tapia R."/>
            <person name="Woyke T."/>
            <person name="Boyum J."/>
            <person name="Mead D."/>
            <person name="Weimer P.J."/>
        </authorList>
    </citation>
    <scope>NUCLEOTIDE SEQUENCE [LARGE SCALE GENOMIC DNA]</scope>
    <source>
        <strain>ATCC 27210 / DSM 20455 / JCM 14654 / NCDO 2250 / 7</strain>
    </source>
</reference>